<gene>
    <name evidence="1" type="primary">recX</name>
    <name type="ordered locus">BT9727_0430</name>
</gene>
<dbReference type="EMBL" id="AE017355">
    <property type="protein sequence ID" value="AAT62333.1"/>
    <property type="molecule type" value="Genomic_DNA"/>
</dbReference>
<dbReference type="RefSeq" id="WP_000268526.1">
    <property type="nucleotide sequence ID" value="NC_005957.1"/>
</dbReference>
<dbReference type="RefSeq" id="YP_034780.1">
    <property type="nucleotide sequence ID" value="NC_005957.1"/>
</dbReference>
<dbReference type="SMR" id="Q6HNU0"/>
<dbReference type="KEGG" id="btk:BT9727_0430"/>
<dbReference type="PATRIC" id="fig|281309.8.peg.457"/>
<dbReference type="HOGENOM" id="CLU_066607_4_0_9"/>
<dbReference type="Proteomes" id="UP000001301">
    <property type="component" value="Chromosome"/>
</dbReference>
<dbReference type="GO" id="GO:0005737">
    <property type="term" value="C:cytoplasm"/>
    <property type="evidence" value="ECO:0007669"/>
    <property type="project" value="UniProtKB-SubCell"/>
</dbReference>
<dbReference type="GO" id="GO:0006282">
    <property type="term" value="P:regulation of DNA repair"/>
    <property type="evidence" value="ECO:0007669"/>
    <property type="project" value="UniProtKB-UniRule"/>
</dbReference>
<dbReference type="Gene3D" id="1.10.10.10">
    <property type="entry name" value="Winged helix-like DNA-binding domain superfamily/Winged helix DNA-binding domain"/>
    <property type="match status" value="4"/>
</dbReference>
<dbReference type="HAMAP" id="MF_01114">
    <property type="entry name" value="RecX"/>
    <property type="match status" value="1"/>
</dbReference>
<dbReference type="InterPro" id="IPR053926">
    <property type="entry name" value="RecX_HTH_1st"/>
</dbReference>
<dbReference type="InterPro" id="IPR053924">
    <property type="entry name" value="RecX_HTH_2nd"/>
</dbReference>
<dbReference type="InterPro" id="IPR053925">
    <property type="entry name" value="RecX_HTH_3rd"/>
</dbReference>
<dbReference type="InterPro" id="IPR003783">
    <property type="entry name" value="Regulatory_RecX"/>
</dbReference>
<dbReference type="InterPro" id="IPR036388">
    <property type="entry name" value="WH-like_DNA-bd_sf"/>
</dbReference>
<dbReference type="NCBIfam" id="NF010733">
    <property type="entry name" value="PRK14135.1"/>
    <property type="match status" value="1"/>
</dbReference>
<dbReference type="PANTHER" id="PTHR33602">
    <property type="entry name" value="REGULATORY PROTEIN RECX FAMILY PROTEIN"/>
    <property type="match status" value="1"/>
</dbReference>
<dbReference type="PANTHER" id="PTHR33602:SF1">
    <property type="entry name" value="REGULATORY PROTEIN RECX FAMILY PROTEIN"/>
    <property type="match status" value="1"/>
</dbReference>
<dbReference type="Pfam" id="PF21982">
    <property type="entry name" value="RecX_HTH1"/>
    <property type="match status" value="1"/>
</dbReference>
<dbReference type="Pfam" id="PF02631">
    <property type="entry name" value="RecX_HTH2"/>
    <property type="match status" value="1"/>
</dbReference>
<dbReference type="Pfam" id="PF21981">
    <property type="entry name" value="RecX_HTH3"/>
    <property type="match status" value="2"/>
</dbReference>
<feature type="chain" id="PRO_0000162419" description="Regulatory protein RecX">
    <location>
        <begin position="1"/>
        <end position="270"/>
    </location>
</feature>
<organism>
    <name type="scientific">Bacillus thuringiensis subsp. konkukian (strain 97-27)</name>
    <dbReference type="NCBI Taxonomy" id="281309"/>
    <lineage>
        <taxon>Bacteria</taxon>
        <taxon>Bacillati</taxon>
        <taxon>Bacillota</taxon>
        <taxon>Bacilli</taxon>
        <taxon>Bacillales</taxon>
        <taxon>Bacillaceae</taxon>
        <taxon>Bacillus</taxon>
        <taxon>Bacillus cereus group</taxon>
    </lineage>
</organism>
<comment type="function">
    <text evidence="1">Modulates RecA activity.</text>
</comment>
<comment type="subcellular location">
    <subcellularLocation>
        <location evidence="1">Cytoplasm</location>
    </subcellularLocation>
</comment>
<comment type="similarity">
    <text evidence="1">Belongs to the RecX family.</text>
</comment>
<keyword id="KW-0963">Cytoplasm</keyword>
<name>RECX_BACHK</name>
<proteinExistence type="inferred from homology"/>
<evidence type="ECO:0000255" key="1">
    <source>
        <dbReference type="HAMAP-Rule" id="MF_01114"/>
    </source>
</evidence>
<protein>
    <recommendedName>
        <fullName evidence="1">Regulatory protein RecX</fullName>
    </recommendedName>
</protein>
<accession>Q6HNU0</accession>
<reference key="1">
    <citation type="journal article" date="2006" name="J. Bacteriol.">
        <title>Pathogenomic sequence analysis of Bacillus cereus and Bacillus thuringiensis isolates closely related to Bacillus anthracis.</title>
        <authorList>
            <person name="Han C.S."/>
            <person name="Xie G."/>
            <person name="Challacombe J.F."/>
            <person name="Altherr M.R."/>
            <person name="Bhotika S.S."/>
            <person name="Bruce D."/>
            <person name="Campbell C.S."/>
            <person name="Campbell M.L."/>
            <person name="Chen J."/>
            <person name="Chertkov O."/>
            <person name="Cleland C."/>
            <person name="Dimitrijevic M."/>
            <person name="Doggett N.A."/>
            <person name="Fawcett J.J."/>
            <person name="Glavina T."/>
            <person name="Goodwin L.A."/>
            <person name="Hill K.K."/>
            <person name="Hitchcock P."/>
            <person name="Jackson P.J."/>
            <person name="Keim P."/>
            <person name="Kewalramani A.R."/>
            <person name="Longmire J."/>
            <person name="Lucas S."/>
            <person name="Malfatti S."/>
            <person name="McMurry K."/>
            <person name="Meincke L.J."/>
            <person name="Misra M."/>
            <person name="Moseman B.L."/>
            <person name="Mundt M."/>
            <person name="Munk A.C."/>
            <person name="Okinaka R.T."/>
            <person name="Parson-Quintana B."/>
            <person name="Reilly L.P."/>
            <person name="Richardson P."/>
            <person name="Robinson D.L."/>
            <person name="Rubin E."/>
            <person name="Saunders E."/>
            <person name="Tapia R."/>
            <person name="Tesmer J.G."/>
            <person name="Thayer N."/>
            <person name="Thompson L.S."/>
            <person name="Tice H."/>
            <person name="Ticknor L.O."/>
            <person name="Wills P.L."/>
            <person name="Brettin T.S."/>
            <person name="Gilna P."/>
        </authorList>
    </citation>
    <scope>NUCLEOTIDE SEQUENCE [LARGE SCALE GENOMIC DNA]</scope>
    <source>
        <strain>97-27</strain>
    </source>
</reference>
<sequence length="270" mass="32125">MAVITKIEVQKRSKERFNVYIDKGQGEEYGFSVNEVILIKHGLQKGLEIDEIALGNILYNEEVQKAYLQAISYLSYQMRTKLEIEDFLRKKEVGQAIISEVVSKLLHDRYINDKEYAILYTRTQSNVNRKGPTVIKRELLNKGVQDLIIMHSLQEYTKEKQIENALILIEKKKKSYQKHSFLQMKLKLDEMLVRKGYSRDVIQICLEELKDEKDDEKQQEALHYHGNKYYEKYKKYDGWTFENKMKQALYRKGFSIDEIEIFLQMKREEG</sequence>